<sequence>MAAPTSKLTPDEDSIRMMLTAKVHIGTKNVENKMRKYVYSRTQEGVHLINLAHTLEKLKVAARAIVTVSNPEEVVVVSARPYGSRAVLKFSHYVGSHPIAGRWIPGTLTNQITQKFIEPRLLVATDPRTDAQSLRESSYVSLPVIALCDTDSPLNYVDIAIPCNNKGKESIALMYWLLAREVLYLRDQLKRWMPWDVLVDTFFWRDPEQFEQKPEETVNTHDDDLLTSRPTVPLHPLPDWSTVDPAHANSSDWKVMAAGHEEWGSFVDTRAQWQ</sequence>
<feature type="chain" id="PRO_0000371612" description="Small ribosomal subunit protein uS2">
    <location>
        <begin position="1"/>
        <end position="274"/>
    </location>
</feature>
<organism>
    <name type="scientific">Theileria parva</name>
    <name type="common">East coast fever infection agent</name>
    <dbReference type="NCBI Taxonomy" id="5875"/>
    <lineage>
        <taxon>Eukaryota</taxon>
        <taxon>Sar</taxon>
        <taxon>Alveolata</taxon>
        <taxon>Apicomplexa</taxon>
        <taxon>Aconoidasida</taxon>
        <taxon>Piroplasmida</taxon>
        <taxon>Theileriidae</taxon>
        <taxon>Theileria</taxon>
    </lineage>
</organism>
<name>RSSA_THEPA</name>
<dbReference type="EMBL" id="AAGK01000004">
    <property type="protein sequence ID" value="EAN32101.1"/>
    <property type="molecule type" value="Genomic_DNA"/>
</dbReference>
<dbReference type="RefSeq" id="XP_764384.1">
    <property type="nucleotide sequence ID" value="XM_759291.1"/>
</dbReference>
<dbReference type="SMR" id="Q4N1J1"/>
<dbReference type="STRING" id="5875.Q4N1J1"/>
<dbReference type="EnsemblProtists" id="EAN32101">
    <property type="protein sequence ID" value="EAN32101"/>
    <property type="gene ID" value="TP04_0748"/>
</dbReference>
<dbReference type="GeneID" id="3500659"/>
<dbReference type="KEGG" id="tpv:TP04_0748"/>
<dbReference type="VEuPathDB" id="PiroplasmaDB:TpMuguga_04g00748"/>
<dbReference type="eggNOG" id="KOG0830">
    <property type="taxonomic scope" value="Eukaryota"/>
</dbReference>
<dbReference type="InParanoid" id="Q4N1J1"/>
<dbReference type="OMA" id="VKNFFEP"/>
<dbReference type="Proteomes" id="UP000001949">
    <property type="component" value="Unassembled WGS sequence"/>
</dbReference>
<dbReference type="GO" id="GO:0022627">
    <property type="term" value="C:cytosolic small ribosomal subunit"/>
    <property type="evidence" value="ECO:0007669"/>
    <property type="project" value="UniProtKB-UniRule"/>
</dbReference>
<dbReference type="GO" id="GO:0003735">
    <property type="term" value="F:structural constituent of ribosome"/>
    <property type="evidence" value="ECO:0007669"/>
    <property type="project" value="UniProtKB-UniRule"/>
</dbReference>
<dbReference type="GO" id="GO:0000028">
    <property type="term" value="P:ribosomal small subunit assembly"/>
    <property type="evidence" value="ECO:0007669"/>
    <property type="project" value="UniProtKB-UniRule"/>
</dbReference>
<dbReference type="GO" id="GO:0006412">
    <property type="term" value="P:translation"/>
    <property type="evidence" value="ECO:0007669"/>
    <property type="project" value="UniProtKB-UniRule"/>
</dbReference>
<dbReference type="CDD" id="cd01425">
    <property type="entry name" value="RPS2"/>
    <property type="match status" value="1"/>
</dbReference>
<dbReference type="FunFam" id="3.40.50.10490:FF:000012">
    <property type="entry name" value="40S ribosomal protein SA"/>
    <property type="match status" value="1"/>
</dbReference>
<dbReference type="Gene3D" id="3.40.50.10490">
    <property type="entry name" value="Glucose-6-phosphate isomerase like protein, domain 1"/>
    <property type="match status" value="1"/>
</dbReference>
<dbReference type="HAMAP" id="MF_03015">
    <property type="entry name" value="Ribosomal_S2_euk"/>
    <property type="match status" value="1"/>
</dbReference>
<dbReference type="InterPro" id="IPR001865">
    <property type="entry name" value="Ribosomal_uS2"/>
</dbReference>
<dbReference type="InterPro" id="IPR018130">
    <property type="entry name" value="Ribosomal_uS2_CS"/>
</dbReference>
<dbReference type="InterPro" id="IPR027498">
    <property type="entry name" value="Ribosomal_uS2_euk"/>
</dbReference>
<dbReference type="InterPro" id="IPR005707">
    <property type="entry name" value="Ribosomal_uS2_euk/arc"/>
</dbReference>
<dbReference type="InterPro" id="IPR023591">
    <property type="entry name" value="Ribosomal_uS2_flav_dom_sf"/>
</dbReference>
<dbReference type="NCBIfam" id="TIGR01012">
    <property type="entry name" value="uS2_euk_arch"/>
    <property type="match status" value="1"/>
</dbReference>
<dbReference type="PANTHER" id="PTHR11489">
    <property type="entry name" value="40S RIBOSOMAL PROTEIN SA"/>
    <property type="match status" value="1"/>
</dbReference>
<dbReference type="Pfam" id="PF00318">
    <property type="entry name" value="Ribosomal_S2"/>
    <property type="match status" value="2"/>
</dbReference>
<dbReference type="PRINTS" id="PR00395">
    <property type="entry name" value="RIBOSOMALS2"/>
</dbReference>
<dbReference type="SUPFAM" id="SSF52313">
    <property type="entry name" value="Ribosomal protein S2"/>
    <property type="match status" value="1"/>
</dbReference>
<dbReference type="PROSITE" id="PS00962">
    <property type="entry name" value="RIBOSOMAL_S2_1"/>
    <property type="match status" value="1"/>
</dbReference>
<comment type="function">
    <text evidence="1">Required for the assembly and/or stability of the 40S ribosomal subunit. Required for the processing of the 20S rRNA-precursor to mature 18S rRNA in a late step of the maturation of 40S ribosomal subunits.</text>
</comment>
<comment type="subunit">
    <text evidence="1">Component of the small ribosomal subunit. Mature ribosomes consist of a small (40S) and a large (60S) subunit. The 40S subunit contains about 33 different proteins and 1 molecule of RNA (18S). The 60S subunit contains about 49 different proteins and 3 molecules of RNA (25S, 5.8S and 5S). Interacts with ribosomal protein S21.</text>
</comment>
<comment type="subcellular location">
    <subcellularLocation>
        <location evidence="1">Cytoplasm</location>
    </subcellularLocation>
</comment>
<comment type="similarity">
    <text evidence="1">Belongs to the universal ribosomal protein uS2 family.</text>
</comment>
<gene>
    <name type="ordered locus">TP04_0748</name>
</gene>
<keyword id="KW-0963">Cytoplasm</keyword>
<keyword id="KW-1185">Reference proteome</keyword>
<keyword id="KW-0687">Ribonucleoprotein</keyword>
<keyword id="KW-0689">Ribosomal protein</keyword>
<proteinExistence type="inferred from homology"/>
<reference key="1">
    <citation type="journal article" date="2005" name="Science">
        <title>Genome sequence of Theileria parva, a bovine pathogen that transforms lymphocytes.</title>
        <authorList>
            <person name="Gardner M.J."/>
            <person name="Bishop R."/>
            <person name="Shah T."/>
            <person name="de Villiers E.P."/>
            <person name="Carlton J.M."/>
            <person name="Hall N."/>
            <person name="Ren Q."/>
            <person name="Paulsen I.T."/>
            <person name="Pain A."/>
            <person name="Berriman M."/>
            <person name="Wilson R.J.M."/>
            <person name="Sato S."/>
            <person name="Ralph S.A."/>
            <person name="Mann D.J."/>
            <person name="Xiong Z."/>
            <person name="Shallom S.J."/>
            <person name="Weidman J."/>
            <person name="Jiang L."/>
            <person name="Lynn J."/>
            <person name="Weaver B."/>
            <person name="Shoaibi A."/>
            <person name="Domingo A.R."/>
            <person name="Wasawo D."/>
            <person name="Crabtree J."/>
            <person name="Wortman J.R."/>
            <person name="Haas B."/>
            <person name="Angiuoli S.V."/>
            <person name="Creasy T.H."/>
            <person name="Lu C."/>
            <person name="Suh B."/>
            <person name="Silva J.C."/>
            <person name="Utterback T.R."/>
            <person name="Feldblyum T.V."/>
            <person name="Pertea M."/>
            <person name="Allen J."/>
            <person name="Nierman W.C."/>
            <person name="Taracha E.L.N."/>
            <person name="Salzberg S.L."/>
            <person name="White O.R."/>
            <person name="Fitzhugh H.A."/>
            <person name="Morzaria S."/>
            <person name="Venter J.C."/>
            <person name="Fraser C.M."/>
            <person name="Nene V."/>
        </authorList>
    </citation>
    <scope>NUCLEOTIDE SEQUENCE [LARGE SCALE GENOMIC DNA]</scope>
    <source>
        <strain>Muguga</strain>
    </source>
</reference>
<evidence type="ECO:0000255" key="1">
    <source>
        <dbReference type="HAMAP-Rule" id="MF_03015"/>
    </source>
</evidence>
<evidence type="ECO:0000305" key="2"/>
<protein>
    <recommendedName>
        <fullName evidence="1">Small ribosomal subunit protein uS2</fullName>
    </recommendedName>
    <alternativeName>
        <fullName evidence="2">40S ribosomal protein SA</fullName>
    </alternativeName>
</protein>
<accession>Q4N1J1</accession>